<proteinExistence type="inferred from homology"/>
<dbReference type="EC" id="1.2.1.38" evidence="1"/>
<dbReference type="EMBL" id="CP000557">
    <property type="protein sequence ID" value="ABO66050.1"/>
    <property type="molecule type" value="Genomic_DNA"/>
</dbReference>
<dbReference type="RefSeq" id="WP_011886929.1">
    <property type="nucleotide sequence ID" value="NC_009328.1"/>
</dbReference>
<dbReference type="SMR" id="A4IL46"/>
<dbReference type="KEGG" id="gtn:GTNG_0670"/>
<dbReference type="eggNOG" id="COG0002">
    <property type="taxonomic scope" value="Bacteria"/>
</dbReference>
<dbReference type="HOGENOM" id="CLU_006384_0_1_9"/>
<dbReference type="UniPathway" id="UPA00068">
    <property type="reaction ID" value="UER00108"/>
</dbReference>
<dbReference type="Proteomes" id="UP000001578">
    <property type="component" value="Chromosome"/>
</dbReference>
<dbReference type="GO" id="GO:0005737">
    <property type="term" value="C:cytoplasm"/>
    <property type="evidence" value="ECO:0007669"/>
    <property type="project" value="UniProtKB-SubCell"/>
</dbReference>
<dbReference type="GO" id="GO:0003942">
    <property type="term" value="F:N-acetyl-gamma-glutamyl-phosphate reductase activity"/>
    <property type="evidence" value="ECO:0007669"/>
    <property type="project" value="UniProtKB-UniRule"/>
</dbReference>
<dbReference type="GO" id="GO:0051287">
    <property type="term" value="F:NAD binding"/>
    <property type="evidence" value="ECO:0007669"/>
    <property type="project" value="InterPro"/>
</dbReference>
<dbReference type="GO" id="GO:0070401">
    <property type="term" value="F:NADP+ binding"/>
    <property type="evidence" value="ECO:0007669"/>
    <property type="project" value="InterPro"/>
</dbReference>
<dbReference type="GO" id="GO:0006526">
    <property type="term" value="P:L-arginine biosynthetic process"/>
    <property type="evidence" value="ECO:0007669"/>
    <property type="project" value="UniProtKB-UniRule"/>
</dbReference>
<dbReference type="CDD" id="cd23934">
    <property type="entry name" value="AGPR_1_C"/>
    <property type="match status" value="1"/>
</dbReference>
<dbReference type="CDD" id="cd17895">
    <property type="entry name" value="AGPR_1_N"/>
    <property type="match status" value="1"/>
</dbReference>
<dbReference type="FunFam" id="3.30.360.10:FF:000014">
    <property type="entry name" value="N-acetyl-gamma-glutamyl-phosphate reductase"/>
    <property type="match status" value="1"/>
</dbReference>
<dbReference type="Gene3D" id="3.30.360.10">
    <property type="entry name" value="Dihydrodipicolinate Reductase, domain 2"/>
    <property type="match status" value="1"/>
</dbReference>
<dbReference type="Gene3D" id="3.40.50.720">
    <property type="entry name" value="NAD(P)-binding Rossmann-like Domain"/>
    <property type="match status" value="1"/>
</dbReference>
<dbReference type="HAMAP" id="MF_00150">
    <property type="entry name" value="ArgC_type1"/>
    <property type="match status" value="1"/>
</dbReference>
<dbReference type="InterPro" id="IPR023013">
    <property type="entry name" value="AGPR_AS"/>
</dbReference>
<dbReference type="InterPro" id="IPR000706">
    <property type="entry name" value="AGPR_type-1"/>
</dbReference>
<dbReference type="InterPro" id="IPR036291">
    <property type="entry name" value="NAD(P)-bd_dom_sf"/>
</dbReference>
<dbReference type="InterPro" id="IPR050085">
    <property type="entry name" value="NAGSA_dehydrogenase"/>
</dbReference>
<dbReference type="InterPro" id="IPR000534">
    <property type="entry name" value="Semialdehyde_DH_NAD-bd"/>
</dbReference>
<dbReference type="NCBIfam" id="TIGR01850">
    <property type="entry name" value="argC"/>
    <property type="match status" value="1"/>
</dbReference>
<dbReference type="PANTHER" id="PTHR32338:SF10">
    <property type="entry name" value="N-ACETYL-GAMMA-GLUTAMYL-PHOSPHATE REDUCTASE, CHLOROPLASTIC-RELATED"/>
    <property type="match status" value="1"/>
</dbReference>
<dbReference type="PANTHER" id="PTHR32338">
    <property type="entry name" value="N-ACETYL-GAMMA-GLUTAMYL-PHOSPHATE REDUCTASE, CHLOROPLASTIC-RELATED-RELATED"/>
    <property type="match status" value="1"/>
</dbReference>
<dbReference type="Pfam" id="PF01118">
    <property type="entry name" value="Semialdhyde_dh"/>
    <property type="match status" value="1"/>
</dbReference>
<dbReference type="Pfam" id="PF22698">
    <property type="entry name" value="Semialdhyde_dhC_1"/>
    <property type="match status" value="1"/>
</dbReference>
<dbReference type="SMART" id="SM00859">
    <property type="entry name" value="Semialdhyde_dh"/>
    <property type="match status" value="1"/>
</dbReference>
<dbReference type="SUPFAM" id="SSF55347">
    <property type="entry name" value="Glyceraldehyde-3-phosphate dehydrogenase-like, C-terminal domain"/>
    <property type="match status" value="1"/>
</dbReference>
<dbReference type="SUPFAM" id="SSF51735">
    <property type="entry name" value="NAD(P)-binding Rossmann-fold domains"/>
    <property type="match status" value="1"/>
</dbReference>
<dbReference type="PROSITE" id="PS01224">
    <property type="entry name" value="ARGC"/>
    <property type="match status" value="1"/>
</dbReference>
<gene>
    <name evidence="1" type="primary">argC</name>
    <name type="ordered locus">GTNG_0670</name>
</gene>
<name>ARGC_GEOTN</name>
<accession>A4IL46</accession>
<reference key="1">
    <citation type="journal article" date="2007" name="Proc. Natl. Acad. Sci. U.S.A.">
        <title>Genome and proteome of long-chain alkane degrading Geobacillus thermodenitrificans NG80-2 isolated from a deep-subsurface oil reservoir.</title>
        <authorList>
            <person name="Feng L."/>
            <person name="Wang W."/>
            <person name="Cheng J."/>
            <person name="Ren Y."/>
            <person name="Zhao G."/>
            <person name="Gao C."/>
            <person name="Tang Y."/>
            <person name="Liu X."/>
            <person name="Han W."/>
            <person name="Peng X."/>
            <person name="Liu R."/>
            <person name="Wang L."/>
        </authorList>
    </citation>
    <scope>NUCLEOTIDE SEQUENCE [LARGE SCALE GENOMIC DNA]</scope>
    <source>
        <strain>NG80-2</strain>
    </source>
</reference>
<sequence>MKVAIIGATGYSGAELFRLLQAHPHVDRCDVYLSSQDGVHLSESFPHVGAVDGAVLHKLDIEALAKYDAVFFATPPGVSGEWAPALVDRGVKVIDLSGDFRLKDGAVYERWYGREAAPAAYLKRAVYGLTEWNRDAVREAELLSNPGCYPTATLLGLAPLVKERLIEEDSIIVDAKSGVSGAGRKAGLGTHFSEVNENVKIYKVNAHQHIPEIEQMLGTWNGAMKPITFSTHLIPMTRGIMSTIYAKVKQPFSLNDLIDLYKTSYEDASFVRIRQPGQFPATKEVYGSNYCDIGLAYDERTGRVTVVSVIDNLMKGAAGQAVQNFNLMMGWDEVEGLCFLPTYP</sequence>
<evidence type="ECO:0000255" key="1">
    <source>
        <dbReference type="HAMAP-Rule" id="MF_00150"/>
    </source>
</evidence>
<comment type="function">
    <text evidence="1">Catalyzes the NADPH-dependent reduction of N-acetyl-5-glutamyl phosphate to yield N-acetyl-L-glutamate 5-semialdehyde.</text>
</comment>
<comment type="catalytic activity">
    <reaction evidence="1">
        <text>N-acetyl-L-glutamate 5-semialdehyde + phosphate + NADP(+) = N-acetyl-L-glutamyl 5-phosphate + NADPH + H(+)</text>
        <dbReference type="Rhea" id="RHEA:21588"/>
        <dbReference type="ChEBI" id="CHEBI:15378"/>
        <dbReference type="ChEBI" id="CHEBI:29123"/>
        <dbReference type="ChEBI" id="CHEBI:43474"/>
        <dbReference type="ChEBI" id="CHEBI:57783"/>
        <dbReference type="ChEBI" id="CHEBI:57936"/>
        <dbReference type="ChEBI" id="CHEBI:58349"/>
        <dbReference type="EC" id="1.2.1.38"/>
    </reaction>
</comment>
<comment type="pathway">
    <text evidence="1">Amino-acid biosynthesis; L-arginine biosynthesis; N(2)-acetyl-L-ornithine from L-glutamate: step 3/4.</text>
</comment>
<comment type="subcellular location">
    <subcellularLocation>
        <location evidence="1">Cytoplasm</location>
    </subcellularLocation>
</comment>
<comment type="similarity">
    <text evidence="1">Belongs to the NAGSA dehydrogenase family. Type 1 subfamily.</text>
</comment>
<keyword id="KW-0028">Amino-acid biosynthesis</keyword>
<keyword id="KW-0055">Arginine biosynthesis</keyword>
<keyword id="KW-0963">Cytoplasm</keyword>
<keyword id="KW-0521">NADP</keyword>
<keyword id="KW-0560">Oxidoreductase</keyword>
<feature type="chain" id="PRO_1000010997" description="N-acetyl-gamma-glutamyl-phosphate reductase">
    <location>
        <begin position="1"/>
        <end position="344"/>
    </location>
</feature>
<feature type="active site" evidence="1">
    <location>
        <position position="148"/>
    </location>
</feature>
<organism>
    <name type="scientific">Geobacillus thermodenitrificans (strain NG80-2)</name>
    <dbReference type="NCBI Taxonomy" id="420246"/>
    <lineage>
        <taxon>Bacteria</taxon>
        <taxon>Bacillati</taxon>
        <taxon>Bacillota</taxon>
        <taxon>Bacilli</taxon>
        <taxon>Bacillales</taxon>
        <taxon>Anoxybacillaceae</taxon>
        <taxon>Geobacillus</taxon>
    </lineage>
</organism>
<protein>
    <recommendedName>
        <fullName evidence="1">N-acetyl-gamma-glutamyl-phosphate reductase</fullName>
        <shortName evidence="1">AGPR</shortName>
        <ecNumber evidence="1">1.2.1.38</ecNumber>
    </recommendedName>
    <alternativeName>
        <fullName evidence="1">N-acetyl-glutamate semialdehyde dehydrogenase</fullName>
        <shortName evidence="1">NAGSA dehydrogenase</shortName>
    </alternativeName>
</protein>